<organism>
    <name type="scientific">Francisella tularensis subsp. tularensis (strain SCHU S4 / Schu 4)</name>
    <dbReference type="NCBI Taxonomy" id="177416"/>
    <lineage>
        <taxon>Bacteria</taxon>
        <taxon>Pseudomonadati</taxon>
        <taxon>Pseudomonadota</taxon>
        <taxon>Gammaproteobacteria</taxon>
        <taxon>Thiotrichales</taxon>
        <taxon>Francisellaceae</taxon>
        <taxon>Francisella</taxon>
    </lineage>
</organism>
<protein>
    <recommendedName>
        <fullName evidence="1">Large ribosomal subunit protein uL5</fullName>
    </recommendedName>
    <alternativeName>
        <fullName evidence="2">50S ribosomal protein L5</fullName>
    </alternativeName>
</protein>
<reference key="1">
    <citation type="journal article" date="2005" name="Nat. Genet.">
        <title>The complete genome sequence of Francisella tularensis, the causative agent of tularemia.</title>
        <authorList>
            <person name="Larsson P."/>
            <person name="Oyston P.C.F."/>
            <person name="Chain P."/>
            <person name="Chu M.C."/>
            <person name="Duffield M."/>
            <person name="Fuxelius H.-H."/>
            <person name="Garcia E."/>
            <person name="Haelltorp G."/>
            <person name="Johansson D."/>
            <person name="Isherwood K.E."/>
            <person name="Karp P.D."/>
            <person name="Larsson E."/>
            <person name="Liu Y."/>
            <person name="Michell S."/>
            <person name="Prior J."/>
            <person name="Prior R."/>
            <person name="Malfatti S."/>
            <person name="Sjoestedt A."/>
            <person name="Svensson K."/>
            <person name="Thompson N."/>
            <person name="Vergez L."/>
            <person name="Wagg J.K."/>
            <person name="Wren B.W."/>
            <person name="Lindler L.E."/>
            <person name="Andersson S.G.E."/>
            <person name="Forsman M."/>
            <person name="Titball R.W."/>
        </authorList>
    </citation>
    <scope>NUCLEOTIDE SEQUENCE [LARGE SCALE GENOMIC DNA]</scope>
    <source>
        <strain>SCHU S4 / Schu 4</strain>
    </source>
</reference>
<feature type="chain" id="PRO_0000243002" description="Large ribosomal subunit protein uL5">
    <location>
        <begin position="1"/>
        <end position="179"/>
    </location>
</feature>
<proteinExistence type="inferred from homology"/>
<gene>
    <name evidence="1" type="primary">rplE</name>
    <name type="ordered locus">FTT_0337</name>
</gene>
<accession>Q5NHV6</accession>
<keyword id="KW-1185">Reference proteome</keyword>
<keyword id="KW-0687">Ribonucleoprotein</keyword>
<keyword id="KW-0689">Ribosomal protein</keyword>
<keyword id="KW-0694">RNA-binding</keyword>
<keyword id="KW-0699">rRNA-binding</keyword>
<keyword id="KW-0820">tRNA-binding</keyword>
<sequence>MARLKDYYQKELVAKLKTELGLDNIMEVPTIKKITLNMGVGDAAKDKKIMTFALNDLTAIAGQKPVVTKSKKSIAGFKIRDGWPIGAKVTLRGDRMYEFLDRLITIAIPRIRDFRGLSAKSFDGRGNYSLGMREQISFPEIDYDKVDSIRGLDISITTTAKNDDQGRALLKAFGFPFKS</sequence>
<evidence type="ECO:0000255" key="1">
    <source>
        <dbReference type="HAMAP-Rule" id="MF_01333"/>
    </source>
</evidence>
<evidence type="ECO:0000305" key="2"/>
<name>RL5_FRATT</name>
<comment type="function">
    <text evidence="1">This is one of the proteins that bind and probably mediate the attachment of the 5S RNA into the large ribosomal subunit, where it forms part of the central protuberance. In the 70S ribosome it contacts protein S13 of the 30S subunit (bridge B1b), connecting the 2 subunits; this bridge is implicated in subunit movement. Contacts the P site tRNA; the 5S rRNA and some of its associated proteins might help stabilize positioning of ribosome-bound tRNAs.</text>
</comment>
<comment type="subunit">
    <text evidence="1">Part of the 50S ribosomal subunit; part of the 5S rRNA/L5/L18/L25 subcomplex. Contacts the 5S rRNA and the P site tRNA. Forms a bridge to the 30S subunit in the 70S ribosome.</text>
</comment>
<comment type="similarity">
    <text evidence="1">Belongs to the universal ribosomal protein uL5 family.</text>
</comment>
<dbReference type="EMBL" id="AJ749949">
    <property type="protein sequence ID" value="CAG44970.1"/>
    <property type="molecule type" value="Genomic_DNA"/>
</dbReference>
<dbReference type="RefSeq" id="WP_003021592.1">
    <property type="nucleotide sequence ID" value="NC_006570.2"/>
</dbReference>
<dbReference type="RefSeq" id="YP_169386.1">
    <property type="nucleotide sequence ID" value="NC_006570.2"/>
</dbReference>
<dbReference type="SMR" id="Q5NHV6"/>
<dbReference type="STRING" id="177416.FTT_0337"/>
<dbReference type="DNASU" id="3192018"/>
<dbReference type="EnsemblBacteria" id="CAG44970">
    <property type="protein sequence ID" value="CAG44970"/>
    <property type="gene ID" value="FTT_0337"/>
</dbReference>
<dbReference type="KEGG" id="ftu:FTT_0337"/>
<dbReference type="eggNOG" id="COG0094">
    <property type="taxonomic scope" value="Bacteria"/>
</dbReference>
<dbReference type="OrthoDB" id="9806626at2"/>
<dbReference type="Proteomes" id="UP000001174">
    <property type="component" value="Chromosome"/>
</dbReference>
<dbReference type="GO" id="GO:1990904">
    <property type="term" value="C:ribonucleoprotein complex"/>
    <property type="evidence" value="ECO:0007669"/>
    <property type="project" value="UniProtKB-KW"/>
</dbReference>
<dbReference type="GO" id="GO:0005840">
    <property type="term" value="C:ribosome"/>
    <property type="evidence" value="ECO:0007669"/>
    <property type="project" value="UniProtKB-KW"/>
</dbReference>
<dbReference type="GO" id="GO:0019843">
    <property type="term" value="F:rRNA binding"/>
    <property type="evidence" value="ECO:0007669"/>
    <property type="project" value="UniProtKB-UniRule"/>
</dbReference>
<dbReference type="GO" id="GO:0003735">
    <property type="term" value="F:structural constituent of ribosome"/>
    <property type="evidence" value="ECO:0007669"/>
    <property type="project" value="InterPro"/>
</dbReference>
<dbReference type="GO" id="GO:0000049">
    <property type="term" value="F:tRNA binding"/>
    <property type="evidence" value="ECO:0007669"/>
    <property type="project" value="UniProtKB-UniRule"/>
</dbReference>
<dbReference type="GO" id="GO:0006412">
    <property type="term" value="P:translation"/>
    <property type="evidence" value="ECO:0007669"/>
    <property type="project" value="UniProtKB-UniRule"/>
</dbReference>
<dbReference type="FunFam" id="3.30.1440.10:FF:000001">
    <property type="entry name" value="50S ribosomal protein L5"/>
    <property type="match status" value="1"/>
</dbReference>
<dbReference type="Gene3D" id="3.30.1440.10">
    <property type="match status" value="1"/>
</dbReference>
<dbReference type="HAMAP" id="MF_01333_B">
    <property type="entry name" value="Ribosomal_uL5_B"/>
    <property type="match status" value="1"/>
</dbReference>
<dbReference type="InterPro" id="IPR002132">
    <property type="entry name" value="Ribosomal_uL5"/>
</dbReference>
<dbReference type="InterPro" id="IPR020930">
    <property type="entry name" value="Ribosomal_uL5_bac-type"/>
</dbReference>
<dbReference type="InterPro" id="IPR031309">
    <property type="entry name" value="Ribosomal_uL5_C"/>
</dbReference>
<dbReference type="InterPro" id="IPR020929">
    <property type="entry name" value="Ribosomal_uL5_CS"/>
</dbReference>
<dbReference type="InterPro" id="IPR022803">
    <property type="entry name" value="Ribosomal_uL5_dom_sf"/>
</dbReference>
<dbReference type="InterPro" id="IPR031310">
    <property type="entry name" value="Ribosomal_uL5_N"/>
</dbReference>
<dbReference type="NCBIfam" id="NF000585">
    <property type="entry name" value="PRK00010.1"/>
    <property type="match status" value="1"/>
</dbReference>
<dbReference type="PANTHER" id="PTHR11994">
    <property type="entry name" value="60S RIBOSOMAL PROTEIN L11-RELATED"/>
    <property type="match status" value="1"/>
</dbReference>
<dbReference type="Pfam" id="PF00281">
    <property type="entry name" value="Ribosomal_L5"/>
    <property type="match status" value="1"/>
</dbReference>
<dbReference type="Pfam" id="PF00673">
    <property type="entry name" value="Ribosomal_L5_C"/>
    <property type="match status" value="1"/>
</dbReference>
<dbReference type="PIRSF" id="PIRSF002161">
    <property type="entry name" value="Ribosomal_L5"/>
    <property type="match status" value="1"/>
</dbReference>
<dbReference type="SUPFAM" id="SSF55282">
    <property type="entry name" value="RL5-like"/>
    <property type="match status" value="1"/>
</dbReference>
<dbReference type="PROSITE" id="PS00358">
    <property type="entry name" value="RIBOSOMAL_L5"/>
    <property type="match status" value="1"/>
</dbReference>